<gene>
    <name evidence="1" type="primary">kdpA</name>
    <name type="ordered locus">Acid345_0510</name>
</gene>
<accession>Q1IUD5</accession>
<protein>
    <recommendedName>
        <fullName evidence="1">Potassium-transporting ATPase potassium-binding subunit</fullName>
    </recommendedName>
    <alternativeName>
        <fullName evidence="1">ATP phosphohydrolase [potassium-transporting] A chain</fullName>
    </alternativeName>
    <alternativeName>
        <fullName evidence="1">Potassium-binding and translocating subunit A</fullName>
    </alternativeName>
    <alternativeName>
        <fullName evidence="1">Potassium-translocating ATPase A chain</fullName>
    </alternativeName>
</protein>
<dbReference type="EMBL" id="CP000360">
    <property type="protein sequence ID" value="ABF39515.1"/>
    <property type="molecule type" value="Genomic_DNA"/>
</dbReference>
<dbReference type="RefSeq" id="WP_011521317.1">
    <property type="nucleotide sequence ID" value="NC_008009.1"/>
</dbReference>
<dbReference type="SMR" id="Q1IUD5"/>
<dbReference type="STRING" id="204669.Acid345_0510"/>
<dbReference type="EnsemblBacteria" id="ABF39515">
    <property type="protein sequence ID" value="ABF39515"/>
    <property type="gene ID" value="Acid345_0510"/>
</dbReference>
<dbReference type="KEGG" id="aba:Acid345_0510"/>
<dbReference type="eggNOG" id="COG2060">
    <property type="taxonomic scope" value="Bacteria"/>
</dbReference>
<dbReference type="HOGENOM" id="CLU_018614_3_0_0"/>
<dbReference type="OrthoDB" id="9763796at2"/>
<dbReference type="Proteomes" id="UP000002432">
    <property type="component" value="Chromosome"/>
</dbReference>
<dbReference type="GO" id="GO:0005886">
    <property type="term" value="C:plasma membrane"/>
    <property type="evidence" value="ECO:0007669"/>
    <property type="project" value="UniProtKB-SubCell"/>
</dbReference>
<dbReference type="GO" id="GO:0008556">
    <property type="term" value="F:P-type potassium transmembrane transporter activity"/>
    <property type="evidence" value="ECO:0007669"/>
    <property type="project" value="InterPro"/>
</dbReference>
<dbReference type="GO" id="GO:0030955">
    <property type="term" value="F:potassium ion binding"/>
    <property type="evidence" value="ECO:0007669"/>
    <property type="project" value="UniProtKB-UniRule"/>
</dbReference>
<dbReference type="HAMAP" id="MF_00275">
    <property type="entry name" value="KdpA"/>
    <property type="match status" value="1"/>
</dbReference>
<dbReference type="InterPro" id="IPR004623">
    <property type="entry name" value="KdpA"/>
</dbReference>
<dbReference type="NCBIfam" id="TIGR00680">
    <property type="entry name" value="kdpA"/>
    <property type="match status" value="1"/>
</dbReference>
<dbReference type="PANTHER" id="PTHR30607">
    <property type="entry name" value="POTASSIUM-TRANSPORTING ATPASE A CHAIN"/>
    <property type="match status" value="1"/>
</dbReference>
<dbReference type="PANTHER" id="PTHR30607:SF2">
    <property type="entry name" value="POTASSIUM-TRANSPORTING ATPASE POTASSIUM-BINDING SUBUNIT"/>
    <property type="match status" value="1"/>
</dbReference>
<dbReference type="Pfam" id="PF03814">
    <property type="entry name" value="KdpA"/>
    <property type="match status" value="1"/>
</dbReference>
<dbReference type="PIRSF" id="PIRSF001294">
    <property type="entry name" value="K_ATPaseA"/>
    <property type="match status" value="1"/>
</dbReference>
<name>KDPA_KORVE</name>
<sequence>MSANGWFQILLFLGLILAVTKPLGVFMARVFNRERTFLDPVLRPIERLIYRCTAVDESQEMKWTEYAIAMLLFSAVSMLMLYIMQRVQLHLPFNPQKFGAVDPAHLAFNTAASFTTNTNWQAYSGEAVMSYFTQMAGLAYHNFMSAAVGIAIAIAFIRGIARRQSETIGNFWVDMTRAVLWVLLPFCIMGALALVSQGVVQNLKPYDTVKLVEPQQVTTTGADGKSSTQTITTQTIAQGPVASQEIIKEWGTNGGGFFNANSSHPYENPTPLSNLIEMFSIFAISAGLTYTLGRMTGSQRHGWAVWGAMAALFLVGVSVVYWAEASGNPLLAGVDQHTSAMQAGGNMEGKEVRFGIANTALFATITTDASCGAINGWHDSFTPLGGMVPLVNIMLSEVIFGGVGAGMYGMLIYIVLAVFIAGLMVGRTPEYLGKKIEAYDVKMAMLVALIFPLIILVFSAISSVKTFGTGSILNPGPHGLSEILYAFVSGTGNNGSAFGGLTVNTPWYDVAIGIAMLGGRFLMIIPMLAIAGNLAKKKYVPASAGTFPVTTPLFSVLLIGTIIIIGALTFFPALSLGPILEHLQMHAGKAF</sequence>
<comment type="function">
    <text evidence="1">Part of the high-affinity ATP-driven potassium transport (or Kdp) system, which catalyzes the hydrolysis of ATP coupled with the electrogenic transport of potassium into the cytoplasm. This subunit binds the periplasmic potassium ions and delivers the ions to the membrane domain of KdpB through an intramembrane tunnel.</text>
</comment>
<comment type="subunit">
    <text evidence="1">The system is composed of three essential subunits: KdpA, KdpB and KdpC.</text>
</comment>
<comment type="subcellular location">
    <subcellularLocation>
        <location evidence="1">Cell inner membrane</location>
        <topology evidence="1">Multi-pass membrane protein</topology>
    </subcellularLocation>
</comment>
<comment type="similarity">
    <text evidence="1">Belongs to the KdpA family.</text>
</comment>
<keyword id="KW-0997">Cell inner membrane</keyword>
<keyword id="KW-1003">Cell membrane</keyword>
<keyword id="KW-0406">Ion transport</keyword>
<keyword id="KW-0472">Membrane</keyword>
<keyword id="KW-0630">Potassium</keyword>
<keyword id="KW-0633">Potassium transport</keyword>
<keyword id="KW-1185">Reference proteome</keyword>
<keyword id="KW-0812">Transmembrane</keyword>
<keyword id="KW-1133">Transmembrane helix</keyword>
<keyword id="KW-0813">Transport</keyword>
<proteinExistence type="inferred from homology"/>
<reference key="1">
    <citation type="journal article" date="2009" name="Appl. Environ. Microbiol.">
        <title>Three genomes from the phylum Acidobacteria provide insight into the lifestyles of these microorganisms in soils.</title>
        <authorList>
            <person name="Ward N.L."/>
            <person name="Challacombe J.F."/>
            <person name="Janssen P.H."/>
            <person name="Henrissat B."/>
            <person name="Coutinho P.M."/>
            <person name="Wu M."/>
            <person name="Xie G."/>
            <person name="Haft D.H."/>
            <person name="Sait M."/>
            <person name="Badger J."/>
            <person name="Barabote R.D."/>
            <person name="Bradley B."/>
            <person name="Brettin T.S."/>
            <person name="Brinkac L.M."/>
            <person name="Bruce D."/>
            <person name="Creasy T."/>
            <person name="Daugherty S.C."/>
            <person name="Davidsen T.M."/>
            <person name="DeBoy R.T."/>
            <person name="Detter J.C."/>
            <person name="Dodson R.J."/>
            <person name="Durkin A.S."/>
            <person name="Ganapathy A."/>
            <person name="Gwinn-Giglio M."/>
            <person name="Han C.S."/>
            <person name="Khouri H."/>
            <person name="Kiss H."/>
            <person name="Kothari S.P."/>
            <person name="Madupu R."/>
            <person name="Nelson K.E."/>
            <person name="Nelson W.C."/>
            <person name="Paulsen I."/>
            <person name="Penn K."/>
            <person name="Ren Q."/>
            <person name="Rosovitz M.J."/>
            <person name="Selengut J.D."/>
            <person name="Shrivastava S."/>
            <person name="Sullivan S.A."/>
            <person name="Tapia R."/>
            <person name="Thompson L.S."/>
            <person name="Watkins K.L."/>
            <person name="Yang Q."/>
            <person name="Yu C."/>
            <person name="Zafar N."/>
            <person name="Zhou L."/>
            <person name="Kuske C.R."/>
        </authorList>
    </citation>
    <scope>NUCLEOTIDE SEQUENCE [LARGE SCALE GENOMIC DNA]</scope>
    <source>
        <strain>Ellin345</strain>
    </source>
</reference>
<feature type="chain" id="PRO_1000022211" description="Potassium-transporting ATPase potassium-binding subunit">
    <location>
        <begin position="1"/>
        <end position="591"/>
    </location>
</feature>
<feature type="transmembrane region" description="Helical" evidence="1">
    <location>
        <begin position="6"/>
        <end position="26"/>
    </location>
</feature>
<feature type="transmembrane region" description="Helical" evidence="1">
    <location>
        <begin position="63"/>
        <end position="83"/>
    </location>
</feature>
<feature type="transmembrane region" description="Helical" evidence="1">
    <location>
        <begin position="137"/>
        <end position="157"/>
    </location>
</feature>
<feature type="transmembrane region" description="Helical" evidence="1">
    <location>
        <begin position="179"/>
        <end position="199"/>
    </location>
</feature>
<feature type="transmembrane region" description="Helical" evidence="1">
    <location>
        <begin position="272"/>
        <end position="292"/>
    </location>
</feature>
<feature type="transmembrane region" description="Helical" evidence="1">
    <location>
        <begin position="303"/>
        <end position="323"/>
    </location>
</feature>
<feature type="transmembrane region" description="Helical" evidence="1">
    <location>
        <begin position="405"/>
        <end position="425"/>
    </location>
</feature>
<feature type="transmembrane region" description="Helical" evidence="1">
    <location>
        <begin position="444"/>
        <end position="464"/>
    </location>
</feature>
<feature type="transmembrane region" description="Helical" evidence="1">
    <location>
        <begin position="510"/>
        <end position="530"/>
    </location>
</feature>
<feature type="transmembrane region" description="Helical" evidence="1">
    <location>
        <begin position="553"/>
        <end position="573"/>
    </location>
</feature>
<evidence type="ECO:0000255" key="1">
    <source>
        <dbReference type="HAMAP-Rule" id="MF_00275"/>
    </source>
</evidence>
<organism>
    <name type="scientific">Koribacter versatilis (strain Ellin345)</name>
    <dbReference type="NCBI Taxonomy" id="204669"/>
    <lineage>
        <taxon>Bacteria</taxon>
        <taxon>Pseudomonadati</taxon>
        <taxon>Acidobacteriota</taxon>
        <taxon>Terriglobia</taxon>
        <taxon>Terriglobales</taxon>
        <taxon>Candidatus Korobacteraceae</taxon>
        <taxon>Candidatus Korobacter</taxon>
    </lineage>
</organism>